<dbReference type="EMBL" id="CR628336">
    <property type="protein sequence ID" value="CAH12700.1"/>
    <property type="molecule type" value="Genomic_DNA"/>
</dbReference>
<dbReference type="RefSeq" id="WP_010947320.1">
    <property type="nucleotide sequence ID" value="NC_006368.1"/>
</dbReference>
<dbReference type="SMR" id="Q5X4X1"/>
<dbReference type="GeneID" id="57035582"/>
<dbReference type="KEGG" id="lpp:lpp1549"/>
<dbReference type="LegioList" id="lpp1549"/>
<dbReference type="HOGENOM" id="CLU_148710_2_3_6"/>
<dbReference type="GO" id="GO:0022627">
    <property type="term" value="C:cytosolic small ribosomal subunit"/>
    <property type="evidence" value="ECO:0007669"/>
    <property type="project" value="TreeGrafter"/>
</dbReference>
<dbReference type="GO" id="GO:0070181">
    <property type="term" value="F:small ribosomal subunit rRNA binding"/>
    <property type="evidence" value="ECO:0007669"/>
    <property type="project" value="TreeGrafter"/>
</dbReference>
<dbReference type="GO" id="GO:0003735">
    <property type="term" value="F:structural constituent of ribosome"/>
    <property type="evidence" value="ECO:0007669"/>
    <property type="project" value="InterPro"/>
</dbReference>
<dbReference type="GO" id="GO:0006412">
    <property type="term" value="P:translation"/>
    <property type="evidence" value="ECO:0007669"/>
    <property type="project" value="UniProtKB-UniRule"/>
</dbReference>
<dbReference type="Gene3D" id="4.10.640.10">
    <property type="entry name" value="Ribosomal protein S18"/>
    <property type="match status" value="1"/>
</dbReference>
<dbReference type="HAMAP" id="MF_00270">
    <property type="entry name" value="Ribosomal_bS18"/>
    <property type="match status" value="1"/>
</dbReference>
<dbReference type="InterPro" id="IPR001648">
    <property type="entry name" value="Ribosomal_bS18"/>
</dbReference>
<dbReference type="InterPro" id="IPR018275">
    <property type="entry name" value="Ribosomal_bS18_CS"/>
</dbReference>
<dbReference type="InterPro" id="IPR036870">
    <property type="entry name" value="Ribosomal_bS18_sf"/>
</dbReference>
<dbReference type="NCBIfam" id="TIGR00165">
    <property type="entry name" value="S18"/>
    <property type="match status" value="1"/>
</dbReference>
<dbReference type="PANTHER" id="PTHR13479">
    <property type="entry name" value="30S RIBOSOMAL PROTEIN S18"/>
    <property type="match status" value="1"/>
</dbReference>
<dbReference type="PANTHER" id="PTHR13479:SF40">
    <property type="entry name" value="SMALL RIBOSOMAL SUBUNIT PROTEIN BS18M"/>
    <property type="match status" value="1"/>
</dbReference>
<dbReference type="Pfam" id="PF01084">
    <property type="entry name" value="Ribosomal_S18"/>
    <property type="match status" value="1"/>
</dbReference>
<dbReference type="PRINTS" id="PR00974">
    <property type="entry name" value="RIBOSOMALS18"/>
</dbReference>
<dbReference type="SUPFAM" id="SSF46911">
    <property type="entry name" value="Ribosomal protein S18"/>
    <property type="match status" value="1"/>
</dbReference>
<dbReference type="PROSITE" id="PS00057">
    <property type="entry name" value="RIBOSOMAL_S18"/>
    <property type="match status" value="1"/>
</dbReference>
<organism>
    <name type="scientific">Legionella pneumophila (strain Paris)</name>
    <dbReference type="NCBI Taxonomy" id="297246"/>
    <lineage>
        <taxon>Bacteria</taxon>
        <taxon>Pseudomonadati</taxon>
        <taxon>Pseudomonadota</taxon>
        <taxon>Gammaproteobacteria</taxon>
        <taxon>Legionellales</taxon>
        <taxon>Legionellaceae</taxon>
        <taxon>Legionella</taxon>
    </lineage>
</organism>
<accession>Q5X4X1</accession>
<reference key="1">
    <citation type="journal article" date="2004" name="Nat. Genet.">
        <title>Evidence in the Legionella pneumophila genome for exploitation of host cell functions and high genome plasticity.</title>
        <authorList>
            <person name="Cazalet C."/>
            <person name="Rusniok C."/>
            <person name="Brueggemann H."/>
            <person name="Zidane N."/>
            <person name="Magnier A."/>
            <person name="Ma L."/>
            <person name="Tichit M."/>
            <person name="Jarraud S."/>
            <person name="Bouchier C."/>
            <person name="Vandenesch F."/>
            <person name="Kunst F."/>
            <person name="Etienne J."/>
            <person name="Glaser P."/>
            <person name="Buchrieser C."/>
        </authorList>
    </citation>
    <scope>NUCLEOTIDE SEQUENCE [LARGE SCALE GENOMIC DNA]</scope>
    <source>
        <strain>Paris</strain>
    </source>
</reference>
<sequence>MSAYFRRKKMCRFSAEGGNEIDYKDINLLKNYITETGKIVPSRITGTQTRFQRQLAKAIKHARFIGLLPYCDSHR</sequence>
<keyword id="KW-0687">Ribonucleoprotein</keyword>
<keyword id="KW-0689">Ribosomal protein</keyword>
<keyword id="KW-0694">RNA-binding</keyword>
<keyword id="KW-0699">rRNA-binding</keyword>
<protein>
    <recommendedName>
        <fullName evidence="1">Small ribosomal subunit protein bS18</fullName>
    </recommendedName>
    <alternativeName>
        <fullName evidence="2">30S ribosomal protein S18</fullName>
    </alternativeName>
</protein>
<gene>
    <name evidence="1" type="primary">rpsR</name>
    <name type="ordered locus">lpp1549</name>
</gene>
<comment type="function">
    <text evidence="1">Binds as a heterodimer with protein bS6 to the central domain of the 16S rRNA, where it helps stabilize the platform of the 30S subunit.</text>
</comment>
<comment type="subunit">
    <text evidence="1">Part of the 30S ribosomal subunit. Forms a tight heterodimer with protein bS6.</text>
</comment>
<comment type="similarity">
    <text evidence="1">Belongs to the bacterial ribosomal protein bS18 family.</text>
</comment>
<name>RS18_LEGPA</name>
<feature type="chain" id="PRO_1000003523" description="Small ribosomal subunit protein bS18">
    <location>
        <begin position="1"/>
        <end position="75"/>
    </location>
</feature>
<proteinExistence type="inferred from homology"/>
<evidence type="ECO:0000255" key="1">
    <source>
        <dbReference type="HAMAP-Rule" id="MF_00270"/>
    </source>
</evidence>
<evidence type="ECO:0000305" key="2"/>